<gene>
    <name evidence="1" type="primary">rpoC</name>
    <name type="ordered locus">c4945</name>
</gene>
<comment type="function">
    <text evidence="1">DNA-dependent RNA polymerase catalyzes the transcription of DNA into RNA using the four ribonucleoside triphosphates as substrates.</text>
</comment>
<comment type="catalytic activity">
    <reaction evidence="1">
        <text>RNA(n) + a ribonucleoside 5'-triphosphate = RNA(n+1) + diphosphate</text>
        <dbReference type="Rhea" id="RHEA:21248"/>
        <dbReference type="Rhea" id="RHEA-COMP:14527"/>
        <dbReference type="Rhea" id="RHEA-COMP:17342"/>
        <dbReference type="ChEBI" id="CHEBI:33019"/>
        <dbReference type="ChEBI" id="CHEBI:61557"/>
        <dbReference type="ChEBI" id="CHEBI:140395"/>
        <dbReference type="EC" id="2.7.7.6"/>
    </reaction>
</comment>
<comment type="cofactor">
    <cofactor evidence="1">
        <name>Mg(2+)</name>
        <dbReference type="ChEBI" id="CHEBI:18420"/>
    </cofactor>
    <text evidence="1">Binds 1 Mg(2+) ion per subunit.</text>
</comment>
<comment type="cofactor">
    <cofactor evidence="1">
        <name>Zn(2+)</name>
        <dbReference type="ChEBI" id="CHEBI:29105"/>
    </cofactor>
    <text evidence="1">Binds 2 Zn(2+) ions per subunit.</text>
</comment>
<comment type="subunit">
    <text evidence="1">The RNAP catalytic core consists of 2 alpha, 1 beta, 1 beta' and 1 omega subunit. When a sigma factor is associated with the core the holoenzyme is formed, which can initiate transcription.</text>
</comment>
<comment type="similarity">
    <text evidence="1">Belongs to the RNA polymerase beta' chain family.</text>
</comment>
<protein>
    <recommendedName>
        <fullName evidence="1">DNA-directed RNA polymerase subunit beta'</fullName>
        <shortName evidence="1">RNAP subunit beta'</shortName>
        <ecNumber evidence="1">2.7.7.6</ecNumber>
    </recommendedName>
    <alternativeName>
        <fullName evidence="1">RNA polymerase subunit beta'</fullName>
    </alternativeName>
    <alternativeName>
        <fullName evidence="1">Transcriptase subunit beta'</fullName>
    </alternativeName>
</protein>
<feature type="chain" id="PRO_0000067743" description="DNA-directed RNA polymerase subunit beta'">
    <location>
        <begin position="1"/>
        <end position="1407"/>
    </location>
</feature>
<feature type="binding site" evidence="1">
    <location>
        <position position="70"/>
    </location>
    <ligand>
        <name>Zn(2+)</name>
        <dbReference type="ChEBI" id="CHEBI:29105"/>
        <label>1</label>
    </ligand>
</feature>
<feature type="binding site" evidence="1">
    <location>
        <position position="72"/>
    </location>
    <ligand>
        <name>Zn(2+)</name>
        <dbReference type="ChEBI" id="CHEBI:29105"/>
        <label>1</label>
    </ligand>
</feature>
<feature type="binding site" evidence="1">
    <location>
        <position position="85"/>
    </location>
    <ligand>
        <name>Zn(2+)</name>
        <dbReference type="ChEBI" id="CHEBI:29105"/>
        <label>1</label>
    </ligand>
</feature>
<feature type="binding site" evidence="1">
    <location>
        <position position="88"/>
    </location>
    <ligand>
        <name>Zn(2+)</name>
        <dbReference type="ChEBI" id="CHEBI:29105"/>
        <label>1</label>
    </ligand>
</feature>
<feature type="binding site" evidence="1">
    <location>
        <position position="460"/>
    </location>
    <ligand>
        <name>Mg(2+)</name>
        <dbReference type="ChEBI" id="CHEBI:18420"/>
    </ligand>
</feature>
<feature type="binding site" evidence="1">
    <location>
        <position position="462"/>
    </location>
    <ligand>
        <name>Mg(2+)</name>
        <dbReference type="ChEBI" id="CHEBI:18420"/>
    </ligand>
</feature>
<feature type="binding site" evidence="1">
    <location>
        <position position="464"/>
    </location>
    <ligand>
        <name>Mg(2+)</name>
        <dbReference type="ChEBI" id="CHEBI:18420"/>
    </ligand>
</feature>
<feature type="binding site" evidence="1">
    <location>
        <position position="814"/>
    </location>
    <ligand>
        <name>Zn(2+)</name>
        <dbReference type="ChEBI" id="CHEBI:29105"/>
        <label>2</label>
    </ligand>
</feature>
<feature type="binding site" evidence="1">
    <location>
        <position position="888"/>
    </location>
    <ligand>
        <name>Zn(2+)</name>
        <dbReference type="ChEBI" id="CHEBI:29105"/>
        <label>2</label>
    </ligand>
</feature>
<feature type="binding site" evidence="1">
    <location>
        <position position="895"/>
    </location>
    <ligand>
        <name>Zn(2+)</name>
        <dbReference type="ChEBI" id="CHEBI:29105"/>
        <label>2</label>
    </ligand>
</feature>
<feature type="binding site" evidence="1">
    <location>
        <position position="898"/>
    </location>
    <ligand>
        <name>Zn(2+)</name>
        <dbReference type="ChEBI" id="CHEBI:29105"/>
        <label>2</label>
    </ligand>
</feature>
<feature type="modified residue" description="N6-acetyllysine" evidence="1">
    <location>
        <position position="972"/>
    </location>
</feature>
<accession>Q8FB83</accession>
<evidence type="ECO:0000255" key="1">
    <source>
        <dbReference type="HAMAP-Rule" id="MF_01322"/>
    </source>
</evidence>
<dbReference type="EC" id="2.7.7.6" evidence="1"/>
<dbReference type="EMBL" id="AE014075">
    <property type="protein sequence ID" value="AAN83373.1"/>
    <property type="molecule type" value="Genomic_DNA"/>
</dbReference>
<dbReference type="RefSeq" id="WP_000653957.1">
    <property type="nucleotide sequence ID" value="NC_004431.1"/>
</dbReference>
<dbReference type="STRING" id="199310.c4945"/>
<dbReference type="KEGG" id="ecc:c4945"/>
<dbReference type="eggNOG" id="COG0086">
    <property type="taxonomic scope" value="Bacteria"/>
</dbReference>
<dbReference type="HOGENOM" id="CLU_000524_3_1_6"/>
<dbReference type="BioCyc" id="ECOL199310:C4945-MONOMER"/>
<dbReference type="Proteomes" id="UP000001410">
    <property type="component" value="Chromosome"/>
</dbReference>
<dbReference type="GO" id="GO:0000428">
    <property type="term" value="C:DNA-directed RNA polymerase complex"/>
    <property type="evidence" value="ECO:0007669"/>
    <property type="project" value="UniProtKB-KW"/>
</dbReference>
<dbReference type="GO" id="GO:0003677">
    <property type="term" value="F:DNA binding"/>
    <property type="evidence" value="ECO:0007669"/>
    <property type="project" value="UniProtKB-UniRule"/>
</dbReference>
<dbReference type="GO" id="GO:0003899">
    <property type="term" value="F:DNA-directed RNA polymerase activity"/>
    <property type="evidence" value="ECO:0007669"/>
    <property type="project" value="UniProtKB-UniRule"/>
</dbReference>
<dbReference type="GO" id="GO:0000287">
    <property type="term" value="F:magnesium ion binding"/>
    <property type="evidence" value="ECO:0007669"/>
    <property type="project" value="UniProtKB-UniRule"/>
</dbReference>
<dbReference type="GO" id="GO:0008270">
    <property type="term" value="F:zinc ion binding"/>
    <property type="evidence" value="ECO:0007669"/>
    <property type="project" value="UniProtKB-UniRule"/>
</dbReference>
<dbReference type="GO" id="GO:0006351">
    <property type="term" value="P:DNA-templated transcription"/>
    <property type="evidence" value="ECO:0007669"/>
    <property type="project" value="UniProtKB-UniRule"/>
</dbReference>
<dbReference type="CDD" id="cd02655">
    <property type="entry name" value="RNAP_beta'_C"/>
    <property type="match status" value="1"/>
</dbReference>
<dbReference type="CDD" id="cd01609">
    <property type="entry name" value="RNAP_beta'_N"/>
    <property type="match status" value="1"/>
</dbReference>
<dbReference type="FunFam" id="1.10.132.30:FF:000003">
    <property type="entry name" value="DNA-directed RNA polymerase subunit beta"/>
    <property type="match status" value="1"/>
</dbReference>
<dbReference type="FunFam" id="1.10.150.390:FF:000002">
    <property type="entry name" value="DNA-directed RNA polymerase subunit beta"/>
    <property type="match status" value="1"/>
</dbReference>
<dbReference type="FunFam" id="1.10.274.100:FF:000002">
    <property type="entry name" value="DNA-directed RNA polymerase subunit beta"/>
    <property type="match status" value="1"/>
</dbReference>
<dbReference type="FunFam" id="1.10.40.90:FF:000001">
    <property type="entry name" value="DNA-directed RNA polymerase subunit beta"/>
    <property type="match status" value="1"/>
</dbReference>
<dbReference type="FunFam" id="2.40.50.100:FF:000012">
    <property type="entry name" value="DNA-directed RNA polymerase subunit beta"/>
    <property type="match status" value="1"/>
</dbReference>
<dbReference type="FunFam" id="2.40.50.100:FF:000016">
    <property type="entry name" value="DNA-directed RNA polymerase subunit beta"/>
    <property type="match status" value="1"/>
</dbReference>
<dbReference type="FunFam" id="2.40.50.100:FF:000019">
    <property type="entry name" value="DNA-directed RNA polymerase subunit beta"/>
    <property type="match status" value="1"/>
</dbReference>
<dbReference type="FunFam" id="4.10.860.120:FF:000001">
    <property type="entry name" value="DNA-directed RNA polymerase subunit beta"/>
    <property type="match status" value="1"/>
</dbReference>
<dbReference type="Gene3D" id="1.10.132.30">
    <property type="match status" value="1"/>
</dbReference>
<dbReference type="Gene3D" id="1.10.150.390">
    <property type="match status" value="1"/>
</dbReference>
<dbReference type="Gene3D" id="1.10.1790.20">
    <property type="match status" value="1"/>
</dbReference>
<dbReference type="Gene3D" id="1.10.40.90">
    <property type="match status" value="1"/>
</dbReference>
<dbReference type="Gene3D" id="2.40.40.20">
    <property type="match status" value="1"/>
</dbReference>
<dbReference type="Gene3D" id="2.40.50.100">
    <property type="match status" value="3"/>
</dbReference>
<dbReference type="Gene3D" id="4.10.860.120">
    <property type="entry name" value="RNA polymerase II, clamp domain"/>
    <property type="match status" value="1"/>
</dbReference>
<dbReference type="Gene3D" id="1.10.274.100">
    <property type="entry name" value="RNA polymerase Rpb1, domain 3"/>
    <property type="match status" value="1"/>
</dbReference>
<dbReference type="HAMAP" id="MF_01322">
    <property type="entry name" value="RNApol_bact_RpoC"/>
    <property type="match status" value="1"/>
</dbReference>
<dbReference type="InterPro" id="IPR045867">
    <property type="entry name" value="DNA-dir_RpoC_beta_prime"/>
</dbReference>
<dbReference type="InterPro" id="IPR012754">
    <property type="entry name" value="DNA-dir_RpoC_beta_prime_bact"/>
</dbReference>
<dbReference type="InterPro" id="IPR000722">
    <property type="entry name" value="RNA_pol_asu"/>
</dbReference>
<dbReference type="InterPro" id="IPR006592">
    <property type="entry name" value="RNA_pol_N"/>
</dbReference>
<dbReference type="InterPro" id="IPR007080">
    <property type="entry name" value="RNA_pol_Rpb1_1"/>
</dbReference>
<dbReference type="InterPro" id="IPR007066">
    <property type="entry name" value="RNA_pol_Rpb1_3"/>
</dbReference>
<dbReference type="InterPro" id="IPR042102">
    <property type="entry name" value="RNA_pol_Rpb1_3_sf"/>
</dbReference>
<dbReference type="InterPro" id="IPR007083">
    <property type="entry name" value="RNA_pol_Rpb1_4"/>
</dbReference>
<dbReference type="InterPro" id="IPR007081">
    <property type="entry name" value="RNA_pol_Rpb1_5"/>
</dbReference>
<dbReference type="InterPro" id="IPR044893">
    <property type="entry name" value="RNA_pol_Rpb1_clamp_domain"/>
</dbReference>
<dbReference type="InterPro" id="IPR038120">
    <property type="entry name" value="Rpb1_funnel_sf"/>
</dbReference>
<dbReference type="NCBIfam" id="TIGR02386">
    <property type="entry name" value="rpoC_TIGR"/>
    <property type="match status" value="1"/>
</dbReference>
<dbReference type="PANTHER" id="PTHR19376">
    <property type="entry name" value="DNA-DIRECTED RNA POLYMERASE"/>
    <property type="match status" value="1"/>
</dbReference>
<dbReference type="PANTHER" id="PTHR19376:SF54">
    <property type="entry name" value="DNA-DIRECTED RNA POLYMERASE SUBUNIT BETA"/>
    <property type="match status" value="1"/>
</dbReference>
<dbReference type="Pfam" id="PF04997">
    <property type="entry name" value="RNA_pol_Rpb1_1"/>
    <property type="match status" value="1"/>
</dbReference>
<dbReference type="Pfam" id="PF00623">
    <property type="entry name" value="RNA_pol_Rpb1_2"/>
    <property type="match status" value="2"/>
</dbReference>
<dbReference type="Pfam" id="PF04983">
    <property type="entry name" value="RNA_pol_Rpb1_3"/>
    <property type="match status" value="1"/>
</dbReference>
<dbReference type="Pfam" id="PF05000">
    <property type="entry name" value="RNA_pol_Rpb1_4"/>
    <property type="match status" value="1"/>
</dbReference>
<dbReference type="Pfam" id="PF04998">
    <property type="entry name" value="RNA_pol_Rpb1_5"/>
    <property type="match status" value="1"/>
</dbReference>
<dbReference type="SMART" id="SM00663">
    <property type="entry name" value="RPOLA_N"/>
    <property type="match status" value="1"/>
</dbReference>
<dbReference type="SUPFAM" id="SSF64484">
    <property type="entry name" value="beta and beta-prime subunits of DNA dependent RNA-polymerase"/>
    <property type="match status" value="1"/>
</dbReference>
<reference key="1">
    <citation type="journal article" date="2002" name="Proc. Natl. Acad. Sci. U.S.A.">
        <title>Extensive mosaic structure revealed by the complete genome sequence of uropathogenic Escherichia coli.</title>
        <authorList>
            <person name="Welch R.A."/>
            <person name="Burland V."/>
            <person name="Plunkett G. III"/>
            <person name="Redford P."/>
            <person name="Roesch P."/>
            <person name="Rasko D."/>
            <person name="Buckles E.L."/>
            <person name="Liou S.-R."/>
            <person name="Boutin A."/>
            <person name="Hackett J."/>
            <person name="Stroud D."/>
            <person name="Mayhew G.F."/>
            <person name="Rose D.J."/>
            <person name="Zhou S."/>
            <person name="Schwartz D.C."/>
            <person name="Perna N.T."/>
            <person name="Mobley H.L.T."/>
            <person name="Donnenberg M.S."/>
            <person name="Blattner F.R."/>
        </authorList>
    </citation>
    <scope>NUCLEOTIDE SEQUENCE [LARGE SCALE GENOMIC DNA]</scope>
    <source>
        <strain>CFT073 / ATCC 700928 / UPEC</strain>
    </source>
</reference>
<sequence>MKDLLKFLKAQTKTEEFDAIKIALASPDMIRSWSFGEVKKPETINYRTFKPERDGLFCARIFGPVKDYECLCGKYKRLKHRGVICEKCGVEVTQTKVRRERMGHIELASPTAHIWFLKSLPSRIGLLLDMPLRDIERVLYFESYVVIEGGMTNLERQQILTEEQYLDALEEFGDEFDAKMGAEAIQALLKSMDLEQECEQLREELNETNSETKRKKLTKRIKLLEAFVQSGNKPEWMILTVLPVLPPDLRPLVPLDGGRFATSDLNDLYRRVINRNNRLKRLLDLAAPDIIVRNEKRMLQEAVDALLDNGRRGRAITGSNKRPLKSLADMIKGKQGRFRQNLLGKRVDYSGRSVITVGPYLRLHQCGLPKKMALELFKPFIYGKLELRGLATTIKAAKKMVEREXAVVWDILDEVIREHPVLLNRAPTLHRLGIQAFEPVLIEGKAIQLHPLVCAAYNADFDGDQMAVHVPLTLEAQLEARALMMSTNNILSPANGEPIIVPSQDVVLGLYYMTRDCVNAKGEGMVLTGPKEAERLYRSGLASLHARVKVRITEYEKDANGELXAKTSLXDTTVGRAILWMIVPKGLPYTIVNQALGKKAISKMLNTCYRILGLKPTVIFADQIMYTGFAYAARSGASVGIDDMVIPEKKHEIISEAEAEVAEIQEQFQSGLVTAGERYNKVIDIWAAANDRVSKAMMDNLQTETVINRDGQEEKQVSFNSIYMMADSGARGSAAQIRQLAGMRGLMAKPDGSIIETPITANFREGLNVLQYFISTHGARKGLADTALKTANSGYLTRRLVDVAQDLVVTEDDCGTHEGIMMTPVIEGGDVKEPLRDRVLGRVTAEDVLKPGTADILVPRNTLLHEQWCDLLEENSVDAVKVRSVVSCDTDFGVCAHCYGRDLARGHIINKGEAIGVIAAQSIGEPGTQLTMRTFHIGGAASRAAAESSIQVKNKGSIKLSNVKSVVNSSGKLVITSRNTELKLIDEFGRTKESYKVPYGAVLAKGDGEQVAGGETVANWDPHTMPVITEVSGFVRFTDMIDGQTITRQTDELTGLSSLVVLDSAERTAGGKDLRPALKIVDAQGNDVLIPGTDMPAQYFLPGKAIVQLEDGVQISSGDTLARIPQESGGTKDITGGLPRVADLFEARRPKEPAILAEISGIVSFGKETKGKRRLVITPVDGSDPYEEMIPKWRQLNVFEGERVERGDVISDGPEAPHDILRLRGVHAVTRYIVNEVQDVYRLQGVKINDKHIEVIVRQMLRKATIVNAGSSDFLEGEQVEYSRVKIANRELEANGKVGATYSRDLLGITKASLATESFISAASFQETTRVLTEAAVAGKRDELRGLKENVIVGRLIPAGTGYAYHQDRMRRRAAGEAPAAPQVTAEDASASLAELLNAGLGGSDNE</sequence>
<keyword id="KW-0007">Acetylation</keyword>
<keyword id="KW-0240">DNA-directed RNA polymerase</keyword>
<keyword id="KW-0460">Magnesium</keyword>
<keyword id="KW-0479">Metal-binding</keyword>
<keyword id="KW-0548">Nucleotidyltransferase</keyword>
<keyword id="KW-1185">Reference proteome</keyword>
<keyword id="KW-0804">Transcription</keyword>
<keyword id="KW-0808">Transferase</keyword>
<keyword id="KW-0862">Zinc</keyword>
<name>RPOC_ECOL6</name>
<organism>
    <name type="scientific">Escherichia coli O6:H1 (strain CFT073 / ATCC 700928 / UPEC)</name>
    <dbReference type="NCBI Taxonomy" id="199310"/>
    <lineage>
        <taxon>Bacteria</taxon>
        <taxon>Pseudomonadati</taxon>
        <taxon>Pseudomonadota</taxon>
        <taxon>Gammaproteobacteria</taxon>
        <taxon>Enterobacterales</taxon>
        <taxon>Enterobacteriaceae</taxon>
        <taxon>Escherichia</taxon>
    </lineage>
</organism>
<proteinExistence type="inferred from homology"/>